<organism>
    <name type="scientific">Cutibacterium acnes (strain DSM 16379 / KPA171202)</name>
    <name type="common">Propionibacterium acnes</name>
    <dbReference type="NCBI Taxonomy" id="267747"/>
    <lineage>
        <taxon>Bacteria</taxon>
        <taxon>Bacillati</taxon>
        <taxon>Actinomycetota</taxon>
        <taxon>Actinomycetes</taxon>
        <taxon>Propionibacteriales</taxon>
        <taxon>Propionibacteriaceae</taxon>
        <taxon>Cutibacterium</taxon>
    </lineage>
</organism>
<comment type="function">
    <text evidence="1">Catalyzes the phosphorylation of the 3'-hydroxyl group of dephosphocoenzyme A to form coenzyme A.</text>
</comment>
<comment type="catalytic activity">
    <reaction evidence="1">
        <text>3'-dephospho-CoA + ATP = ADP + CoA + H(+)</text>
        <dbReference type="Rhea" id="RHEA:18245"/>
        <dbReference type="ChEBI" id="CHEBI:15378"/>
        <dbReference type="ChEBI" id="CHEBI:30616"/>
        <dbReference type="ChEBI" id="CHEBI:57287"/>
        <dbReference type="ChEBI" id="CHEBI:57328"/>
        <dbReference type="ChEBI" id="CHEBI:456216"/>
        <dbReference type="EC" id="2.7.1.24"/>
    </reaction>
</comment>
<comment type="pathway">
    <text evidence="1">Cofactor biosynthesis; coenzyme A biosynthesis; CoA from (R)-pantothenate: step 5/5.</text>
</comment>
<comment type="subcellular location">
    <subcellularLocation>
        <location evidence="1">Cytoplasm</location>
    </subcellularLocation>
</comment>
<comment type="similarity">
    <text evidence="1">Belongs to the CoaE family.</text>
</comment>
<accession>Q6A9M5</accession>
<gene>
    <name evidence="1" type="primary">coaE</name>
    <name type="ordered locus">PPA0785</name>
</gene>
<name>COAE_CUTAK</name>
<proteinExistence type="inferred from homology"/>
<sequence length="231" mass="24972">MRRTVIGDETTARDVARADWVAGAGGVVRVGLTGGIASGKSTVSQMLGERGAVIIDYDRLSRDVVAVGTQGLAQVVEAFGREVLVADGSLNRSALGSIVFADLQARRRLEAIIHPLVEEAAHRVDEEARAADGLVVVVHDIPLLVETGRADEFDVVMVTDVDPAEQVRRVVERDGCSQADAWARIHAQASREEHLAVADVIIDTSVPLEDLPEQIDRVWSRIAGALRFDRR</sequence>
<reference key="1">
    <citation type="journal article" date="2004" name="Science">
        <title>The complete genome sequence of Propionibacterium acnes, a commensal of human skin.</title>
        <authorList>
            <person name="Brueggemann H."/>
            <person name="Henne A."/>
            <person name="Hoster F."/>
            <person name="Liesegang H."/>
            <person name="Wiezer A."/>
            <person name="Strittmatter A."/>
            <person name="Hujer S."/>
            <person name="Duerre P."/>
            <person name="Gottschalk G."/>
        </authorList>
    </citation>
    <scope>NUCLEOTIDE SEQUENCE [LARGE SCALE GENOMIC DNA]</scope>
    <source>
        <strain>DSM 16379 / KPA171202</strain>
    </source>
</reference>
<keyword id="KW-0067">ATP-binding</keyword>
<keyword id="KW-0173">Coenzyme A biosynthesis</keyword>
<keyword id="KW-0963">Cytoplasm</keyword>
<keyword id="KW-0418">Kinase</keyword>
<keyword id="KW-0547">Nucleotide-binding</keyword>
<keyword id="KW-0808">Transferase</keyword>
<dbReference type="EC" id="2.7.1.24" evidence="1"/>
<dbReference type="EMBL" id="AE017283">
    <property type="protein sequence ID" value="AAT82541.1"/>
    <property type="molecule type" value="Genomic_DNA"/>
</dbReference>
<dbReference type="RefSeq" id="WP_011183739.1">
    <property type="nucleotide sequence ID" value="NC_006085.1"/>
</dbReference>
<dbReference type="SMR" id="Q6A9M5"/>
<dbReference type="EnsemblBacteria" id="AAT82541">
    <property type="protein sequence ID" value="AAT82541"/>
    <property type="gene ID" value="PPA0785"/>
</dbReference>
<dbReference type="KEGG" id="pac:PPA0785"/>
<dbReference type="PATRIC" id="fig|267747.3.peg.822"/>
<dbReference type="eggNOG" id="COG0237">
    <property type="taxonomic scope" value="Bacteria"/>
</dbReference>
<dbReference type="HOGENOM" id="CLU_057180_1_1_11"/>
<dbReference type="UniPathway" id="UPA00241">
    <property type="reaction ID" value="UER00356"/>
</dbReference>
<dbReference type="Proteomes" id="UP000000603">
    <property type="component" value="Chromosome"/>
</dbReference>
<dbReference type="GO" id="GO:0005737">
    <property type="term" value="C:cytoplasm"/>
    <property type="evidence" value="ECO:0007669"/>
    <property type="project" value="UniProtKB-SubCell"/>
</dbReference>
<dbReference type="GO" id="GO:0005524">
    <property type="term" value="F:ATP binding"/>
    <property type="evidence" value="ECO:0007669"/>
    <property type="project" value="UniProtKB-UniRule"/>
</dbReference>
<dbReference type="GO" id="GO:0004140">
    <property type="term" value="F:dephospho-CoA kinase activity"/>
    <property type="evidence" value="ECO:0007669"/>
    <property type="project" value="UniProtKB-UniRule"/>
</dbReference>
<dbReference type="GO" id="GO:0015937">
    <property type="term" value="P:coenzyme A biosynthetic process"/>
    <property type="evidence" value="ECO:0007669"/>
    <property type="project" value="UniProtKB-UniRule"/>
</dbReference>
<dbReference type="CDD" id="cd02022">
    <property type="entry name" value="DPCK"/>
    <property type="match status" value="1"/>
</dbReference>
<dbReference type="Gene3D" id="3.40.50.300">
    <property type="entry name" value="P-loop containing nucleotide triphosphate hydrolases"/>
    <property type="match status" value="1"/>
</dbReference>
<dbReference type="HAMAP" id="MF_00376">
    <property type="entry name" value="Dephospho_CoA_kinase"/>
    <property type="match status" value="1"/>
</dbReference>
<dbReference type="InterPro" id="IPR001977">
    <property type="entry name" value="Depp_CoAkinase"/>
</dbReference>
<dbReference type="InterPro" id="IPR027417">
    <property type="entry name" value="P-loop_NTPase"/>
</dbReference>
<dbReference type="NCBIfam" id="TIGR00152">
    <property type="entry name" value="dephospho-CoA kinase"/>
    <property type="match status" value="1"/>
</dbReference>
<dbReference type="NCBIfam" id="NF002879">
    <property type="entry name" value="PRK03333.1"/>
    <property type="match status" value="1"/>
</dbReference>
<dbReference type="PANTHER" id="PTHR10695:SF46">
    <property type="entry name" value="BIFUNCTIONAL COENZYME A SYNTHASE-RELATED"/>
    <property type="match status" value="1"/>
</dbReference>
<dbReference type="PANTHER" id="PTHR10695">
    <property type="entry name" value="DEPHOSPHO-COA KINASE-RELATED"/>
    <property type="match status" value="1"/>
</dbReference>
<dbReference type="Pfam" id="PF01121">
    <property type="entry name" value="CoaE"/>
    <property type="match status" value="1"/>
</dbReference>
<dbReference type="SUPFAM" id="SSF52540">
    <property type="entry name" value="P-loop containing nucleoside triphosphate hydrolases"/>
    <property type="match status" value="1"/>
</dbReference>
<dbReference type="PROSITE" id="PS51219">
    <property type="entry name" value="DPCK"/>
    <property type="match status" value="1"/>
</dbReference>
<evidence type="ECO:0000255" key="1">
    <source>
        <dbReference type="HAMAP-Rule" id="MF_00376"/>
    </source>
</evidence>
<feature type="chain" id="PRO_0000243317" description="Dephospho-CoA kinase">
    <location>
        <begin position="1"/>
        <end position="231"/>
    </location>
</feature>
<feature type="domain" description="DPCK" evidence="1">
    <location>
        <begin position="29"/>
        <end position="231"/>
    </location>
</feature>
<feature type="binding site" evidence="1">
    <location>
        <begin position="37"/>
        <end position="42"/>
    </location>
    <ligand>
        <name>ATP</name>
        <dbReference type="ChEBI" id="CHEBI:30616"/>
    </ligand>
</feature>
<protein>
    <recommendedName>
        <fullName evidence="1">Dephospho-CoA kinase</fullName>
        <ecNumber evidence="1">2.7.1.24</ecNumber>
    </recommendedName>
    <alternativeName>
        <fullName evidence="1">Dephosphocoenzyme A kinase</fullName>
    </alternativeName>
</protein>